<organism>
    <name type="scientific">Methylocella silvestris (strain DSM 15510 / CIP 108128 / LMG 27833 / NCIMB 13906 / BL2)</name>
    <dbReference type="NCBI Taxonomy" id="395965"/>
    <lineage>
        <taxon>Bacteria</taxon>
        <taxon>Pseudomonadati</taxon>
        <taxon>Pseudomonadota</taxon>
        <taxon>Alphaproteobacteria</taxon>
        <taxon>Hyphomicrobiales</taxon>
        <taxon>Beijerinckiaceae</taxon>
        <taxon>Methylocella</taxon>
    </lineage>
</organism>
<keyword id="KW-0227">DNA damage</keyword>
<keyword id="KW-0233">DNA recombination</keyword>
<keyword id="KW-0234">DNA repair</keyword>
<keyword id="KW-0238">DNA-binding</keyword>
<keyword id="KW-1185">Reference proteome</keyword>
<gene>
    <name evidence="1" type="primary">ku</name>
    <name type="ordered locus">Msil_1735</name>
</gene>
<feature type="chain" id="PRO_0000389190" description="Non-homologous end joining protein Ku">
    <location>
        <begin position="1"/>
        <end position="271"/>
    </location>
</feature>
<feature type="domain" description="Ku" evidence="1">
    <location>
        <begin position="12"/>
        <end position="194"/>
    </location>
</feature>
<feature type="region of interest" description="Disordered" evidence="2">
    <location>
        <begin position="225"/>
        <end position="249"/>
    </location>
</feature>
<comment type="function">
    <text evidence="1">With LigD forms a non-homologous end joining (NHEJ) DNA repair enzyme, which repairs dsDNA breaks with reduced fidelity. Binds linear dsDNA with 5'- and 3'- overhangs but not closed circular dsDNA nor ssDNA. Recruits and stimulates the ligase activity of LigD.</text>
</comment>
<comment type="subunit">
    <text evidence="1">Homodimer. Interacts with LigD.</text>
</comment>
<comment type="similarity">
    <text evidence="1">Belongs to the prokaryotic Ku family.</text>
</comment>
<dbReference type="EMBL" id="CP001280">
    <property type="protein sequence ID" value="ACK50681.1"/>
    <property type="molecule type" value="Genomic_DNA"/>
</dbReference>
<dbReference type="RefSeq" id="WP_012590751.1">
    <property type="nucleotide sequence ID" value="NC_011666.1"/>
</dbReference>
<dbReference type="SMR" id="B8EKE1"/>
<dbReference type="STRING" id="395965.Msil_1735"/>
<dbReference type="KEGG" id="msl:Msil_1735"/>
<dbReference type="eggNOG" id="COG1273">
    <property type="taxonomic scope" value="Bacteria"/>
</dbReference>
<dbReference type="HOGENOM" id="CLU_048975_0_0_5"/>
<dbReference type="OrthoDB" id="9780854at2"/>
<dbReference type="Proteomes" id="UP000002257">
    <property type="component" value="Chromosome"/>
</dbReference>
<dbReference type="GO" id="GO:0003690">
    <property type="term" value="F:double-stranded DNA binding"/>
    <property type="evidence" value="ECO:0007669"/>
    <property type="project" value="UniProtKB-UniRule"/>
</dbReference>
<dbReference type="GO" id="GO:0006310">
    <property type="term" value="P:DNA recombination"/>
    <property type="evidence" value="ECO:0007669"/>
    <property type="project" value="UniProtKB-KW"/>
</dbReference>
<dbReference type="GO" id="GO:0006303">
    <property type="term" value="P:double-strand break repair via nonhomologous end joining"/>
    <property type="evidence" value="ECO:0007669"/>
    <property type="project" value="UniProtKB-UniRule"/>
</dbReference>
<dbReference type="Gene3D" id="2.40.290.10">
    <property type="match status" value="1"/>
</dbReference>
<dbReference type="HAMAP" id="MF_01875">
    <property type="entry name" value="Prokaryotic_Ku"/>
    <property type="match status" value="1"/>
</dbReference>
<dbReference type="InterPro" id="IPR006164">
    <property type="entry name" value="Ku70/Ku80_beta-barrel_dom"/>
</dbReference>
<dbReference type="InterPro" id="IPR009187">
    <property type="entry name" value="Prok_Ku"/>
</dbReference>
<dbReference type="InterPro" id="IPR016194">
    <property type="entry name" value="SPOC-like_C_dom_sf"/>
</dbReference>
<dbReference type="NCBIfam" id="TIGR02772">
    <property type="entry name" value="Ku_bact"/>
    <property type="match status" value="1"/>
</dbReference>
<dbReference type="PANTHER" id="PTHR41251">
    <property type="entry name" value="NON-HOMOLOGOUS END JOINING PROTEIN KU"/>
    <property type="match status" value="1"/>
</dbReference>
<dbReference type="PANTHER" id="PTHR41251:SF1">
    <property type="entry name" value="NON-HOMOLOGOUS END JOINING PROTEIN KU"/>
    <property type="match status" value="1"/>
</dbReference>
<dbReference type="Pfam" id="PF02735">
    <property type="entry name" value="Ku"/>
    <property type="match status" value="1"/>
</dbReference>
<dbReference type="PIRSF" id="PIRSF006493">
    <property type="entry name" value="Prok_Ku"/>
    <property type="match status" value="1"/>
</dbReference>
<dbReference type="SMART" id="SM00559">
    <property type="entry name" value="Ku78"/>
    <property type="match status" value="1"/>
</dbReference>
<dbReference type="SUPFAM" id="SSF100939">
    <property type="entry name" value="SPOC domain-like"/>
    <property type="match status" value="1"/>
</dbReference>
<proteinExistence type="inferred from homology"/>
<sequence length="271" mass="30596">MAPRSFWKGYLKLSLVTCPVVMAPAKSEKEKLRFHTLNRATGNRVQSRYIDSVSGKPVDSADQVKGFPRDDQSYVMLEDEELDSVALESARTIDIELFAPADSIDWIWYDAPHYLTPGDEVGEEAFAVIREAMKATKMVGISRLVLYRRERAVLLEPRGKGIILWTLRYGDEVRDPKLYFDAIKDQKPVPELLSLVNRLIEERVKPWSPEMASDPVQDRLRDIIEAKKTPPAKKTKAEEKTGKGSAESNVIDIMDALRKSLGPAAKKPKGR</sequence>
<accession>B8EKE1</accession>
<name>KU_METSB</name>
<evidence type="ECO:0000255" key="1">
    <source>
        <dbReference type="HAMAP-Rule" id="MF_01875"/>
    </source>
</evidence>
<evidence type="ECO:0000256" key="2">
    <source>
        <dbReference type="SAM" id="MobiDB-lite"/>
    </source>
</evidence>
<reference key="1">
    <citation type="journal article" date="2010" name="J. Bacteriol.">
        <title>Complete genome sequence of the aerobic facultative methanotroph Methylocella silvestris BL2.</title>
        <authorList>
            <person name="Chen Y."/>
            <person name="Crombie A."/>
            <person name="Rahman M.T."/>
            <person name="Dedysh S.N."/>
            <person name="Liesack W."/>
            <person name="Stott M.B."/>
            <person name="Alam M."/>
            <person name="Theisen A.R."/>
            <person name="Murrell J.C."/>
            <person name="Dunfield P.F."/>
        </authorList>
    </citation>
    <scope>NUCLEOTIDE SEQUENCE [LARGE SCALE GENOMIC DNA]</scope>
    <source>
        <strain>DSM 15510 / CIP 108128 / LMG 27833 / NCIMB 13906 / BL2</strain>
    </source>
</reference>
<protein>
    <recommendedName>
        <fullName evidence="1">Non-homologous end joining protein Ku</fullName>
    </recommendedName>
</protein>